<accession>A5V5U9</accession>
<feature type="chain" id="PRO_1000026495" description="Malate dehydrogenase">
    <location>
        <begin position="1"/>
        <end position="320"/>
    </location>
</feature>
<feature type="active site" description="Proton acceptor" evidence="1">
    <location>
        <position position="176"/>
    </location>
</feature>
<feature type="binding site" evidence="1">
    <location>
        <begin position="10"/>
        <end position="15"/>
    </location>
    <ligand>
        <name>NAD(+)</name>
        <dbReference type="ChEBI" id="CHEBI:57540"/>
    </ligand>
</feature>
<feature type="binding site" evidence="1">
    <location>
        <position position="34"/>
    </location>
    <ligand>
        <name>NAD(+)</name>
        <dbReference type="ChEBI" id="CHEBI:57540"/>
    </ligand>
</feature>
<feature type="binding site" evidence="1">
    <location>
        <position position="83"/>
    </location>
    <ligand>
        <name>substrate</name>
    </ligand>
</feature>
<feature type="binding site" evidence="1">
    <location>
        <position position="89"/>
    </location>
    <ligand>
        <name>substrate</name>
    </ligand>
</feature>
<feature type="binding site" evidence="1">
    <location>
        <position position="96"/>
    </location>
    <ligand>
        <name>NAD(+)</name>
        <dbReference type="ChEBI" id="CHEBI:57540"/>
    </ligand>
</feature>
<feature type="binding site" evidence="1">
    <location>
        <begin position="119"/>
        <end position="121"/>
    </location>
    <ligand>
        <name>NAD(+)</name>
        <dbReference type="ChEBI" id="CHEBI:57540"/>
    </ligand>
</feature>
<feature type="binding site" evidence="1">
    <location>
        <position position="121"/>
    </location>
    <ligand>
        <name>substrate</name>
    </ligand>
</feature>
<feature type="binding site" evidence="1">
    <location>
        <position position="152"/>
    </location>
    <ligand>
        <name>substrate</name>
    </ligand>
</feature>
<name>MDH_RHIWR</name>
<proteinExistence type="inferred from homology"/>
<dbReference type="EC" id="1.1.1.37" evidence="1"/>
<dbReference type="EMBL" id="CP000699">
    <property type="protein sequence ID" value="ABQ67665.1"/>
    <property type="molecule type" value="Genomic_DNA"/>
</dbReference>
<dbReference type="SMR" id="A5V5U9"/>
<dbReference type="STRING" id="392499.Swit_1300"/>
<dbReference type="PaxDb" id="392499-Swit_1300"/>
<dbReference type="KEGG" id="swi:Swit_1300"/>
<dbReference type="eggNOG" id="COG0039">
    <property type="taxonomic scope" value="Bacteria"/>
</dbReference>
<dbReference type="HOGENOM" id="CLU_045401_2_1_5"/>
<dbReference type="OrthoDB" id="9802969at2"/>
<dbReference type="Proteomes" id="UP000001989">
    <property type="component" value="Chromosome"/>
</dbReference>
<dbReference type="GO" id="GO:0004459">
    <property type="term" value="F:L-lactate dehydrogenase activity"/>
    <property type="evidence" value="ECO:0007669"/>
    <property type="project" value="TreeGrafter"/>
</dbReference>
<dbReference type="GO" id="GO:0030060">
    <property type="term" value="F:L-malate dehydrogenase (NAD+) activity"/>
    <property type="evidence" value="ECO:0007669"/>
    <property type="project" value="UniProtKB-UniRule"/>
</dbReference>
<dbReference type="GO" id="GO:0006089">
    <property type="term" value="P:lactate metabolic process"/>
    <property type="evidence" value="ECO:0007669"/>
    <property type="project" value="TreeGrafter"/>
</dbReference>
<dbReference type="GO" id="GO:0006099">
    <property type="term" value="P:tricarboxylic acid cycle"/>
    <property type="evidence" value="ECO:0007669"/>
    <property type="project" value="UniProtKB-UniRule"/>
</dbReference>
<dbReference type="CDD" id="cd01339">
    <property type="entry name" value="LDH-like_MDH"/>
    <property type="match status" value="1"/>
</dbReference>
<dbReference type="FunFam" id="3.40.50.720:FF:000018">
    <property type="entry name" value="Malate dehydrogenase"/>
    <property type="match status" value="1"/>
</dbReference>
<dbReference type="FunFam" id="3.90.110.10:FF:000004">
    <property type="entry name" value="Malate dehydrogenase"/>
    <property type="match status" value="1"/>
</dbReference>
<dbReference type="Gene3D" id="3.90.110.10">
    <property type="entry name" value="Lactate dehydrogenase/glycoside hydrolase, family 4, C-terminal"/>
    <property type="match status" value="1"/>
</dbReference>
<dbReference type="Gene3D" id="3.40.50.720">
    <property type="entry name" value="NAD(P)-binding Rossmann-like Domain"/>
    <property type="match status" value="1"/>
</dbReference>
<dbReference type="HAMAP" id="MF_00487">
    <property type="entry name" value="Malate_dehydrog_3"/>
    <property type="match status" value="1"/>
</dbReference>
<dbReference type="InterPro" id="IPR001557">
    <property type="entry name" value="L-lactate/malate_DH"/>
</dbReference>
<dbReference type="InterPro" id="IPR022383">
    <property type="entry name" value="Lactate/malate_DH_C"/>
</dbReference>
<dbReference type="InterPro" id="IPR001236">
    <property type="entry name" value="Lactate/malate_DH_N"/>
</dbReference>
<dbReference type="InterPro" id="IPR015955">
    <property type="entry name" value="Lactate_DH/Glyco_Ohase_4_C"/>
</dbReference>
<dbReference type="InterPro" id="IPR011275">
    <property type="entry name" value="Malate_DH_type3"/>
</dbReference>
<dbReference type="InterPro" id="IPR036291">
    <property type="entry name" value="NAD(P)-bd_dom_sf"/>
</dbReference>
<dbReference type="NCBIfam" id="TIGR01763">
    <property type="entry name" value="MalateDH_bact"/>
    <property type="match status" value="1"/>
</dbReference>
<dbReference type="NCBIfam" id="NF004863">
    <property type="entry name" value="PRK06223.1"/>
    <property type="match status" value="1"/>
</dbReference>
<dbReference type="PANTHER" id="PTHR43128">
    <property type="entry name" value="L-2-HYDROXYCARBOXYLATE DEHYDROGENASE (NAD(P)(+))"/>
    <property type="match status" value="1"/>
</dbReference>
<dbReference type="PANTHER" id="PTHR43128:SF16">
    <property type="entry name" value="L-LACTATE DEHYDROGENASE"/>
    <property type="match status" value="1"/>
</dbReference>
<dbReference type="Pfam" id="PF02866">
    <property type="entry name" value="Ldh_1_C"/>
    <property type="match status" value="1"/>
</dbReference>
<dbReference type="Pfam" id="PF00056">
    <property type="entry name" value="Ldh_1_N"/>
    <property type="match status" value="1"/>
</dbReference>
<dbReference type="PIRSF" id="PIRSF000102">
    <property type="entry name" value="Lac_mal_DH"/>
    <property type="match status" value="1"/>
</dbReference>
<dbReference type="PRINTS" id="PR00086">
    <property type="entry name" value="LLDHDRGNASE"/>
</dbReference>
<dbReference type="SUPFAM" id="SSF56327">
    <property type="entry name" value="LDH C-terminal domain-like"/>
    <property type="match status" value="1"/>
</dbReference>
<dbReference type="SUPFAM" id="SSF51735">
    <property type="entry name" value="NAD(P)-binding Rossmann-fold domains"/>
    <property type="match status" value="1"/>
</dbReference>
<organism>
    <name type="scientific">Rhizorhabdus wittichii (strain DSM 6014 / CCUG 31198 / JCM 15750 / NBRC 105917 / EY 4224 / RW1)</name>
    <name type="common">Sphingomonas wittichii</name>
    <dbReference type="NCBI Taxonomy" id="392499"/>
    <lineage>
        <taxon>Bacteria</taxon>
        <taxon>Pseudomonadati</taxon>
        <taxon>Pseudomonadota</taxon>
        <taxon>Alphaproteobacteria</taxon>
        <taxon>Sphingomonadales</taxon>
        <taxon>Sphingomonadaceae</taxon>
        <taxon>Rhizorhabdus</taxon>
    </lineage>
</organism>
<gene>
    <name evidence="1" type="primary">mdh</name>
    <name type="ordered locus">Swit_1300</name>
</gene>
<evidence type="ECO:0000255" key="1">
    <source>
        <dbReference type="HAMAP-Rule" id="MF_00487"/>
    </source>
</evidence>
<protein>
    <recommendedName>
        <fullName evidence="1">Malate dehydrogenase</fullName>
        <ecNumber evidence="1">1.1.1.37</ecNumber>
    </recommendedName>
</protein>
<keyword id="KW-0520">NAD</keyword>
<keyword id="KW-0560">Oxidoreductase</keyword>
<keyword id="KW-1185">Reference proteome</keyword>
<keyword id="KW-0816">Tricarboxylic acid cycle</keyword>
<reference key="1">
    <citation type="journal article" date="2010" name="J. Bacteriol.">
        <title>Genome sequence of the dioxin-mineralizing bacterium Sphingomonas wittichii RW1.</title>
        <authorList>
            <person name="Miller T.R."/>
            <person name="Delcher A.L."/>
            <person name="Salzberg S.L."/>
            <person name="Saunders E."/>
            <person name="Detter J.C."/>
            <person name="Halden R.U."/>
        </authorList>
    </citation>
    <scope>NUCLEOTIDE SEQUENCE [LARGE SCALE GENOMIC DNA]</scope>
    <source>
        <strain>DSM 6014 / CCUG 31198 / JCM 15750 / NBRC 105917 / EY 4224 / RW1</strain>
    </source>
</reference>
<sequence>MARTKIALIGAGNIGGTLAHLAASKELGDVVLFDVVEGVPQGKALDLSQCGPVEGFDAKLKGTNDYADIAGADVIIVTAGVARKPGMSRDDLLGINLKVMKSVGEGIKANAPDAFVICITNPLDAMVWALREFSGLPHNKVVGMAGVLDSARFATFLAEEFNVSVQDVTTFVLGGHGDTMVPVVEYSTVAGIPIPDLIKMGWSTQERIDAIVQRTRSGGGEIVALLKTGSAFYAPATSAIAMAESYLKDKKRVLPCAAYLSGEYGVDDLYVGVPVIIGANGVEKIVEINLSDSAKANLQVSVDAVKELLVACKGIDSSLA</sequence>
<comment type="function">
    <text evidence="1">Catalyzes the reversible oxidation of malate to oxaloacetate.</text>
</comment>
<comment type="catalytic activity">
    <reaction evidence="1">
        <text>(S)-malate + NAD(+) = oxaloacetate + NADH + H(+)</text>
        <dbReference type="Rhea" id="RHEA:21432"/>
        <dbReference type="ChEBI" id="CHEBI:15378"/>
        <dbReference type="ChEBI" id="CHEBI:15589"/>
        <dbReference type="ChEBI" id="CHEBI:16452"/>
        <dbReference type="ChEBI" id="CHEBI:57540"/>
        <dbReference type="ChEBI" id="CHEBI:57945"/>
        <dbReference type="EC" id="1.1.1.37"/>
    </reaction>
</comment>
<comment type="similarity">
    <text evidence="1">Belongs to the LDH/MDH superfamily. MDH type 3 family.</text>
</comment>